<dbReference type="EMBL" id="L13696">
    <property type="protein sequence ID" value="AAA87967.1"/>
    <property type="molecule type" value="Genomic_DNA"/>
</dbReference>
<dbReference type="RefSeq" id="NP_040819.1">
    <property type="nucleotide sequence ID" value="NC_001447.1"/>
</dbReference>
<dbReference type="GeneID" id="1261015"/>
<dbReference type="KEGG" id="vg:1261015"/>
<dbReference type="Proteomes" id="UP000001573">
    <property type="component" value="Genome"/>
</dbReference>
<organism>
    <name type="scientific">Acholeplasma phage L2</name>
    <name type="common">Bacteriophage L2</name>
    <dbReference type="NCBI Taxonomy" id="46014"/>
    <lineage>
        <taxon>Viruses</taxon>
        <taxon>Viruses incertae sedis</taxon>
        <taxon>Plasmaviridae</taxon>
        <taxon>Plasmavirus</taxon>
    </lineage>
</organism>
<proteinExistence type="predicted"/>
<protein>
    <recommendedName>
        <fullName>Uncharacterized 25.6 kDa protein</fullName>
    </recommendedName>
    <alternativeName>
        <fullName>ORF11</fullName>
    </alternativeName>
</protein>
<accession>P42546</accession>
<organismHost>
    <name type="scientific">Mycoplasma</name>
    <dbReference type="NCBI Taxonomy" id="2093"/>
</organismHost>
<name>YO11_BPL2</name>
<feature type="chain" id="PRO_0000066357" description="Uncharacterized 25.6 kDa protein">
    <location>
        <begin position="1"/>
        <end position="218"/>
    </location>
</feature>
<sequence>MKKLINQFIYIDENNPRVLMEPGIFIAVKLINLFIQTYISNAKITYSNDELIGKMGCSRSGLYDAFRVLEREGLIKRIYSDTKKRNRTEIEFNIDLAASWLKLTIYDKAYKNAPKRSLLRAVVSQTMIIIKDTKERILEAVGVRKSKDRKQRIEQIVKETERNYNRYVKHLKQRKIKQDKINATRKESILRHHLILGSIDWIKSLGMEPNPPDTLKIA</sequence>
<reference key="1">
    <citation type="journal article" date="1994" name="Gene">
        <title>Sequence analysis of a unique temperature phage: mycoplasma virus L2.</title>
        <authorList>
            <person name="Maniloff J."/>
            <person name="Kampo G.J."/>
            <person name="Dascher C.C."/>
        </authorList>
    </citation>
    <scope>NUCLEOTIDE SEQUENCE [LARGE SCALE GENOMIC DNA]</scope>
</reference>
<keyword id="KW-1185">Reference proteome</keyword>